<sequence>MSRWLWPWSNCVKERVCRYLLQHYLGHFFQEHLSLDQLSLDLYKGSVALRDIHLETWSVNEFLRSMESPLELVEGFVSSIEVAVPWAALLTDHCTVCVSGLQLTLQPRQGSGPGAADSQSWASCMTTSLQLAQECLREGLPEPSEPPQPLEGLEMFAQTIETVLRRIKVTFLNTVVRVEHSLGDEDRSVAVEVRVQRLEYCDEAVRDPSQAPPVDVHQPPAFLHKLLQLSGVCLYFEELPSQADPPQPPLQIGSCTGYVELMVRLKQNEAFPGPKLEVSGQLGSLHLLLTPRQLQQLQRLLSAVNLADPAGLADKLNKSRPLGAEDLWLIEQDLNQQLQAGAVAESLSLYPITNPLNLDSTDLFFSMAGLTSSVTSAVSELSVYSVDLGSSVHSNMAFHRPSTPPHSGGKMAPTPLLDTTRPDSLVKMTLGGVSLTLLQTASPSSGPSDLPTHFFAEFDAAKDGPFGSRDFSHLRPRFQRACPCSHVRLTGTAVQLSWELRTGSHSRRTSSTEVHFGQLEVLECLWPRAATEPEYTEILSFPSHSGSEASARPCAHLRHTQTIRRVLKSRSRRSTACHCHSELSLDLADFQSDVELGSLDRLAALFRQVTTPSEPPAGLLTEPPQATELQTVFRLSAPRATLRLRFPIPDLRPDRDPWAGQAVRAEQLRLELSEPQFRSELNSGPGPPAPTRLELTCSDLQGIYEDGEKPPVPCLRVSKALNPRSTEAKYFLPQVVVTLNPQSSGTQWETAYEKGRDLELSTESPCELQQPEPSPFSSKRTMYETEEMVIPGDPEEMRTFQSRTLALSRCTLDVIMPSAHIFLPSKEVYESIYNRINNDLLMWEPADLLPTSSAAARPPGSSGFKMCKSAFKLDSDSDEEDAQFFSMASGVPQTPAPEPSRRQSQSTFSTLVTVLKGRITALCEAKDETGKRLDVTHGELVLDVEQGTIFSVAQYRGQPGLGYFCLEAEKAKLYHRAAIEDYLLPTHLEVPSFAPPAQLAPTIYPSEEGVTERGTLGRKGQGPPMLSAAVRIHLDPHKNVKEFLVTVRLHKATLRHYMAPPEQSWHSQLLDFLDVLDDPVLGYLPPTVITVLHTHLFSCAVDYRPLYLPVRVLVTAETFTLSSNIVMDTSTFLLRFILDDSALYLSDKCEVESLDLRRDYVCVLDIDLLELVIKTWKGSTEGRLSQPLFELRCSNNVVHVHSCADSCALLVNLLQYLTSSGDLHPPPRPPSPTEIAGQKLSESPASLPSCLPVETALINQRDLTDALLDTERRGLQELAQSSGGPLPQASPVSVYLFPGERSGAQAPLPPPGASSHTLGSKAKEHENEEEGDGDTLDSDEFCILDAPGLGIAPRDGEPIVTQLHPGPIIVHDGHFSQPLGSTDLLRAPAHFPVPSSRVVLREVSFIWHLYGGRDFGLHPTYRARVGLTGPRVSPSRSSGPNRPQNSWRTQGGIGRQHQVLMEIQLSKVSFQHEVYPEESAIAGGLGQELDERPLSRQVLIVQELEIRDRLATSKINKFLHLHTSERLPRRTHSNMLTIKALHVAPTSSVGGPECCLRVSMMPLRLNVDQDALFFLKDFFTSLAASINPMVPGDTSEAPRETHSRPGSPQEGQSEDTETASNPPEAPGSSHSSSDQQPIYFREFRFTSEVPICLDYHGKHVTVDQVGTFMGLLIGLAQLNCSELKLKRLCCRHGLLGVDKVLCYALNEWLQDIRKNQLPGLLGGVGPMHSVVQLFQGFRDLLWLPIEQYRKDGRLIRGLQRGAASFGSSTASAALELSNRLVQAIQATAETVYDILSPASPVSRSLQDKRSSRKLRRGQQPADLREGMAKAYDAVREGILDTAQTICDVASRGHEQKGLTGAVGGVIRQLPPTVVKPIIVATEATSNVLGGMRNQILPDAHKDHALKWRLEEAQD</sequence>
<feature type="chain" id="PRO_0000315235" description="Autophagy-related protein 2 homolog A">
    <location>
        <begin position="1"/>
        <end position="1914"/>
    </location>
</feature>
<feature type="domain" description="Chorein N-terminal" evidence="4">
    <location>
        <begin position="14"/>
        <end position="112"/>
    </location>
</feature>
<feature type="region of interest" description="Disordered" evidence="5">
    <location>
        <begin position="1222"/>
        <end position="1243"/>
    </location>
</feature>
<feature type="region of interest" description="Disordered" evidence="5">
    <location>
        <begin position="1299"/>
        <end position="1337"/>
    </location>
</feature>
<feature type="region of interest" description="WIPI-interacting" evidence="2">
    <location>
        <begin position="1337"/>
        <end position="1383"/>
    </location>
</feature>
<feature type="region of interest" description="Disordered" evidence="5">
    <location>
        <begin position="1427"/>
        <end position="1452"/>
    </location>
</feature>
<feature type="region of interest" description="Disordered" evidence="5">
    <location>
        <begin position="1589"/>
        <end position="1634"/>
    </location>
</feature>
<feature type="region of interest" description="Disordered" evidence="5">
    <location>
        <begin position="1803"/>
        <end position="1822"/>
    </location>
</feature>
<feature type="compositionally biased region" description="Acidic residues" evidence="5">
    <location>
        <begin position="1327"/>
        <end position="1337"/>
    </location>
</feature>
<feature type="compositionally biased region" description="Low complexity" evidence="5">
    <location>
        <begin position="1429"/>
        <end position="1446"/>
    </location>
</feature>
<feature type="modified residue" description="Phosphoserine" evidence="2">
    <location>
        <position position="764"/>
    </location>
</feature>
<feature type="modified residue" description="Phosphoserine" evidence="11">
    <location>
        <position position="869"/>
    </location>
</feature>
<feature type="modified residue" description="Phosphoserine" evidence="10 11">
    <location>
        <position position="875"/>
    </location>
</feature>
<feature type="modified residue" description="Phosphoserine" evidence="10 11">
    <location>
        <position position="877"/>
    </location>
</feature>
<feature type="modified residue" description="Phosphoserine" evidence="11">
    <location>
        <position position="1246"/>
    </location>
</feature>
<feature type="modified residue" description="Phosphoserine" evidence="2">
    <location>
        <position position="1282"/>
    </location>
</feature>
<feature type="modified residue" description="Phosphoserine" evidence="2">
    <location>
        <position position="1290"/>
    </location>
</feature>
<feature type="modified residue" description="Phosphoserine" evidence="2">
    <location>
        <position position="1381"/>
    </location>
</feature>
<feature type="sequence conflict" description="In Ref. 1; BAC97942." evidence="9" ref="1">
    <original>L</original>
    <variation>M</variation>
    <location>
        <position position="285"/>
    </location>
</feature>
<feature type="sequence conflict" description="In Ref. 3; BAE30685." evidence="9" ref="3">
    <original>R</original>
    <variation>G</variation>
    <location>
        <position position="1738"/>
    </location>
</feature>
<feature type="sequence conflict" description="In Ref. 3; BAE30685." evidence="9" ref="3">
    <original>V</original>
    <variation>M</variation>
    <location>
        <position position="1865"/>
    </location>
</feature>
<organism>
    <name type="scientific">Mus musculus</name>
    <name type="common">Mouse</name>
    <dbReference type="NCBI Taxonomy" id="10090"/>
    <lineage>
        <taxon>Eukaryota</taxon>
        <taxon>Metazoa</taxon>
        <taxon>Chordata</taxon>
        <taxon>Craniata</taxon>
        <taxon>Vertebrata</taxon>
        <taxon>Euteleostomi</taxon>
        <taxon>Mammalia</taxon>
        <taxon>Eutheria</taxon>
        <taxon>Euarchontoglires</taxon>
        <taxon>Glires</taxon>
        <taxon>Rodentia</taxon>
        <taxon>Myomorpha</taxon>
        <taxon>Muroidea</taxon>
        <taxon>Muridae</taxon>
        <taxon>Murinae</taxon>
        <taxon>Mus</taxon>
        <taxon>Mus</taxon>
    </lineage>
</organism>
<accession>Q6P4T0</accession>
<accession>Q3U9I1</accession>
<accession>Q6PHN0</accession>
<accession>Q6ZQC4</accession>
<accession>Q8R213</accession>
<protein>
    <recommendedName>
        <fullName evidence="8">Autophagy-related protein 2 homolog A</fullName>
    </recommendedName>
</protein>
<comment type="function">
    <text evidence="2">Lipid transfer protein involved in autophagosome assembly. Tethers the edge of the isolation membrane (IM) to the endoplasmic reticulum (ER) and mediates direct lipid transfer from ER to IM for IM expansion. Binds to the ER exit site (ERES), which is the membrane source for autophagosome formation, and extracts phospholipids from the membrane source and transfers them to ATG9 (ATG9A or ATG9B) to the IM for membrane expansion. Lipid transfer activity is enhanced by WIPI1 and WDR45/WIPI4, which promote ATG2A-association with phosphatidylinositol 3-monophosphate (PI3P)-containing membranes. Also regulates lipid droplets morphology and distribution within the cell.</text>
</comment>
<comment type="function">
    <text evidence="6">(Microbial infection) Mediates the intracellular lifestyle of Cryptococcus neoformans by supporting infection.</text>
</comment>
<comment type="catalytic activity">
    <reaction evidence="2">
        <text>a 1,2-diacyl-sn-glycero-3-phospho-L-serine(in) = a 1,2-diacyl-sn-glycero-3-phospho-L-serine(out)</text>
        <dbReference type="Rhea" id="RHEA:38663"/>
        <dbReference type="ChEBI" id="CHEBI:57262"/>
    </reaction>
</comment>
<comment type="catalytic activity">
    <reaction evidence="2">
        <text>a 1,2-diacyl-sn-glycero-3-phosphoethanolamine(in) = a 1,2-diacyl-sn-glycero-3-phosphoethanolamine(out)</text>
        <dbReference type="Rhea" id="RHEA:38895"/>
        <dbReference type="ChEBI" id="CHEBI:64612"/>
    </reaction>
</comment>
<comment type="subunit">
    <text evidence="2">Interacts with ATG9A (via C-terminus). Interacts with TMEM41B. Interacts with VMP1.</text>
</comment>
<comment type="subcellular location">
    <subcellularLocation>
        <location evidence="2">Preautophagosomal structure membrane</location>
        <topology evidence="3">Peripheral membrane protein</topology>
    </subcellularLocation>
    <subcellularLocation>
        <location evidence="3">Lipid droplet</location>
    </subcellularLocation>
    <subcellularLocation>
        <location evidence="2">Endoplasmic reticulum membrane</location>
        <topology evidence="1">Peripheral membrane protein</topology>
    </subcellularLocation>
    <text evidence="2">Localizes to endoplasmic reticulum-autophagosome contact sites.</text>
</comment>
<comment type="domain">
    <text evidence="2">The chorein N-terminal domain mediates lipid transfer activity.</text>
</comment>
<comment type="similarity">
    <text evidence="9">Belongs to the ATG2 family.</text>
</comment>
<comment type="sequence caution" evidence="9">
    <conflict type="erroneous initiation">
        <sequence resource="EMBL-CDS" id="BAC97942"/>
    </conflict>
</comment>
<comment type="sequence caution" evidence="9">
    <conflict type="frameshift">
        <sequence resource="EMBL-CDS" id="BAE30685"/>
    </conflict>
</comment>
<dbReference type="EMBL" id="AK129132">
    <property type="protein sequence ID" value="BAC97942.1"/>
    <property type="status" value="ALT_INIT"/>
    <property type="molecule type" value="mRNA"/>
</dbReference>
<dbReference type="EMBL" id="BC022657">
    <property type="protein sequence ID" value="AAH22657.1"/>
    <property type="molecule type" value="mRNA"/>
</dbReference>
<dbReference type="EMBL" id="BC056482">
    <property type="protein sequence ID" value="AAH56482.2"/>
    <property type="molecule type" value="mRNA"/>
</dbReference>
<dbReference type="EMBL" id="BC063264">
    <property type="protein sequence ID" value="AAH63264.2"/>
    <property type="molecule type" value="mRNA"/>
</dbReference>
<dbReference type="EMBL" id="AK151782">
    <property type="protein sequence ID" value="BAE30685.1"/>
    <property type="status" value="ALT_FRAME"/>
    <property type="molecule type" value="mRNA"/>
</dbReference>
<dbReference type="CCDS" id="CCDS29500.1"/>
<dbReference type="RefSeq" id="NP_919329.2">
    <property type="nucleotide sequence ID" value="NM_194348.3"/>
</dbReference>
<dbReference type="BioGRID" id="236694">
    <property type="interactions" value="5"/>
</dbReference>
<dbReference type="FunCoup" id="Q6P4T0">
    <property type="interactions" value="1029"/>
</dbReference>
<dbReference type="IntAct" id="Q6P4T0">
    <property type="interactions" value="16"/>
</dbReference>
<dbReference type="MINT" id="Q6P4T0"/>
<dbReference type="STRING" id="10090.ENSMUSP00000046412"/>
<dbReference type="GlyGen" id="Q6P4T0">
    <property type="glycosylation" value="1 site"/>
</dbReference>
<dbReference type="iPTMnet" id="Q6P4T0"/>
<dbReference type="PhosphoSitePlus" id="Q6P4T0"/>
<dbReference type="PaxDb" id="10090-ENSMUSP00000046412"/>
<dbReference type="ProteomicsDB" id="265176"/>
<dbReference type="Pumba" id="Q6P4T0"/>
<dbReference type="Antibodypedia" id="44102">
    <property type="antibodies" value="171 antibodies from 24 providers"/>
</dbReference>
<dbReference type="DNASU" id="329015"/>
<dbReference type="Ensembl" id="ENSMUST00000045351.13">
    <property type="protein sequence ID" value="ENSMUSP00000046412.7"/>
    <property type="gene ID" value="ENSMUSG00000024773.16"/>
</dbReference>
<dbReference type="GeneID" id="329015"/>
<dbReference type="KEGG" id="mmu:329015"/>
<dbReference type="UCSC" id="uc008ghu.1">
    <property type="organism name" value="mouse"/>
</dbReference>
<dbReference type="AGR" id="MGI:1916291"/>
<dbReference type="CTD" id="23130"/>
<dbReference type="MGI" id="MGI:1916291">
    <property type="gene designation" value="Atg2a"/>
</dbReference>
<dbReference type="VEuPathDB" id="HostDB:ENSMUSG00000024773"/>
<dbReference type="eggNOG" id="KOG2993">
    <property type="taxonomic scope" value="Eukaryota"/>
</dbReference>
<dbReference type="GeneTree" id="ENSGT00620000087966"/>
<dbReference type="HOGENOM" id="CLU_001781_0_0_1"/>
<dbReference type="InParanoid" id="Q6P4T0"/>
<dbReference type="OMA" id="RPCAQIH"/>
<dbReference type="OrthoDB" id="18982at2759"/>
<dbReference type="PhylomeDB" id="Q6P4T0"/>
<dbReference type="TreeFam" id="TF313482"/>
<dbReference type="BioGRID-ORCS" id="329015">
    <property type="hits" value="7 hits in 77 CRISPR screens"/>
</dbReference>
<dbReference type="ChiTaRS" id="Atg2a">
    <property type="organism name" value="mouse"/>
</dbReference>
<dbReference type="PRO" id="PR:Q6P4T0"/>
<dbReference type="Proteomes" id="UP000000589">
    <property type="component" value="Chromosome 19"/>
</dbReference>
<dbReference type="RNAct" id="Q6P4T0">
    <property type="molecule type" value="protein"/>
</dbReference>
<dbReference type="Bgee" id="ENSMUSG00000024773">
    <property type="expression patterns" value="Expressed in granulocyte and 63 other cell types or tissues"/>
</dbReference>
<dbReference type="ExpressionAtlas" id="Q6P4T0">
    <property type="expression patterns" value="baseline and differential"/>
</dbReference>
<dbReference type="GO" id="GO:0005789">
    <property type="term" value="C:endoplasmic reticulum membrane"/>
    <property type="evidence" value="ECO:0007669"/>
    <property type="project" value="UniProtKB-SubCell"/>
</dbReference>
<dbReference type="GO" id="GO:0005811">
    <property type="term" value="C:lipid droplet"/>
    <property type="evidence" value="ECO:0007669"/>
    <property type="project" value="UniProtKB-SubCell"/>
</dbReference>
<dbReference type="GO" id="GO:0044232">
    <property type="term" value="C:organelle membrane contact site"/>
    <property type="evidence" value="ECO:0000250"/>
    <property type="project" value="UniProtKB"/>
</dbReference>
<dbReference type="GO" id="GO:0034045">
    <property type="term" value="C:phagophore assembly site membrane"/>
    <property type="evidence" value="ECO:0007669"/>
    <property type="project" value="UniProtKB-SubCell"/>
</dbReference>
<dbReference type="GO" id="GO:0120013">
    <property type="term" value="F:lipid transfer activity"/>
    <property type="evidence" value="ECO:0000250"/>
    <property type="project" value="UniProtKB"/>
</dbReference>
<dbReference type="GO" id="GO:0000045">
    <property type="term" value="P:autophagosome assembly"/>
    <property type="evidence" value="ECO:0000250"/>
    <property type="project" value="UniProtKB"/>
</dbReference>
<dbReference type="GO" id="GO:2000786">
    <property type="term" value="P:positive regulation of autophagosome assembly"/>
    <property type="evidence" value="ECO:0000250"/>
    <property type="project" value="UniProtKB"/>
</dbReference>
<dbReference type="InterPro" id="IPR026849">
    <property type="entry name" value="ATG2"/>
</dbReference>
<dbReference type="PANTHER" id="PTHR13190">
    <property type="entry name" value="AUTOPHAGY-RELATED 2, ISOFORM A"/>
    <property type="match status" value="1"/>
</dbReference>
<dbReference type="PANTHER" id="PTHR13190:SF21">
    <property type="entry name" value="AUTOPHAGY-RELATED PROTEIN 2 HOMOLOG A"/>
    <property type="match status" value="1"/>
</dbReference>
<dbReference type="Pfam" id="PF13329">
    <property type="entry name" value="ATG2_CAD"/>
    <property type="match status" value="3"/>
</dbReference>
<name>ATG2A_MOUSE</name>
<evidence type="ECO:0000250" key="1">
    <source>
        <dbReference type="UniProtKB" id="P53855"/>
    </source>
</evidence>
<evidence type="ECO:0000250" key="2">
    <source>
        <dbReference type="UniProtKB" id="Q2TAZ0"/>
    </source>
</evidence>
<evidence type="ECO:0000250" key="3">
    <source>
        <dbReference type="UniProtKB" id="Q96BY7"/>
    </source>
</evidence>
<evidence type="ECO:0000255" key="4"/>
<evidence type="ECO:0000256" key="5">
    <source>
        <dbReference type="SAM" id="MobiDB-lite"/>
    </source>
</evidence>
<evidence type="ECO:0000269" key="6">
    <source>
    </source>
</evidence>
<evidence type="ECO:0000303" key="7">
    <source>
    </source>
</evidence>
<evidence type="ECO:0000303" key="8">
    <source>
    </source>
</evidence>
<evidence type="ECO:0000305" key="9"/>
<evidence type="ECO:0007744" key="10">
    <source>
    </source>
</evidence>
<evidence type="ECO:0007744" key="11">
    <source>
    </source>
</evidence>
<proteinExistence type="evidence at protein level"/>
<gene>
    <name evidence="8" type="primary">Atg2a</name>
    <name evidence="7" type="synonym">Kiaa0404</name>
</gene>
<reference key="1">
    <citation type="journal article" date="2003" name="DNA Res.">
        <title>Prediction of the coding sequences of mouse homologues of KIAA gene: III. The complete nucleotide sequences of 500 mouse KIAA-homologous cDNAs identified by screening of terminal sequences of cDNA clones randomly sampled from size-fractionated libraries.</title>
        <authorList>
            <person name="Okazaki N."/>
            <person name="Kikuno R."/>
            <person name="Ohara R."/>
            <person name="Inamoto S."/>
            <person name="Koseki H."/>
            <person name="Hiraoka S."/>
            <person name="Saga Y."/>
            <person name="Nagase T."/>
            <person name="Ohara O."/>
            <person name="Koga H."/>
        </authorList>
    </citation>
    <scope>NUCLEOTIDE SEQUENCE [LARGE SCALE MRNA]</scope>
    <source>
        <tissue>Embryonic tail</tissue>
    </source>
</reference>
<reference key="2">
    <citation type="journal article" date="2004" name="Genome Res.">
        <title>The status, quality, and expansion of the NIH full-length cDNA project: the Mammalian Gene Collection (MGC).</title>
        <authorList>
            <consortium name="The MGC Project Team"/>
        </authorList>
    </citation>
    <scope>NUCLEOTIDE SEQUENCE [LARGE SCALE MRNA]</scope>
    <source>
        <strain>C57BL/6J</strain>
        <strain>FVB/N</strain>
        <tissue>Brain</tissue>
        <tissue>Colon</tissue>
    </source>
</reference>
<reference key="3">
    <citation type="journal article" date="2005" name="Science">
        <title>The transcriptional landscape of the mammalian genome.</title>
        <authorList>
            <person name="Carninci P."/>
            <person name="Kasukawa T."/>
            <person name="Katayama S."/>
            <person name="Gough J."/>
            <person name="Frith M.C."/>
            <person name="Maeda N."/>
            <person name="Oyama R."/>
            <person name="Ravasi T."/>
            <person name="Lenhard B."/>
            <person name="Wells C."/>
            <person name="Kodzius R."/>
            <person name="Shimokawa K."/>
            <person name="Bajic V.B."/>
            <person name="Brenner S.E."/>
            <person name="Batalov S."/>
            <person name="Forrest A.R."/>
            <person name="Zavolan M."/>
            <person name="Davis M.J."/>
            <person name="Wilming L.G."/>
            <person name="Aidinis V."/>
            <person name="Allen J.E."/>
            <person name="Ambesi-Impiombato A."/>
            <person name="Apweiler R."/>
            <person name="Aturaliya R.N."/>
            <person name="Bailey T.L."/>
            <person name="Bansal M."/>
            <person name="Baxter L."/>
            <person name="Beisel K.W."/>
            <person name="Bersano T."/>
            <person name="Bono H."/>
            <person name="Chalk A.M."/>
            <person name="Chiu K.P."/>
            <person name="Choudhary V."/>
            <person name="Christoffels A."/>
            <person name="Clutterbuck D.R."/>
            <person name="Crowe M.L."/>
            <person name="Dalla E."/>
            <person name="Dalrymple B.P."/>
            <person name="de Bono B."/>
            <person name="Della Gatta G."/>
            <person name="di Bernardo D."/>
            <person name="Down T."/>
            <person name="Engstrom P."/>
            <person name="Fagiolini M."/>
            <person name="Faulkner G."/>
            <person name="Fletcher C.F."/>
            <person name="Fukushima T."/>
            <person name="Furuno M."/>
            <person name="Futaki S."/>
            <person name="Gariboldi M."/>
            <person name="Georgii-Hemming P."/>
            <person name="Gingeras T.R."/>
            <person name="Gojobori T."/>
            <person name="Green R.E."/>
            <person name="Gustincich S."/>
            <person name="Harbers M."/>
            <person name="Hayashi Y."/>
            <person name="Hensch T.K."/>
            <person name="Hirokawa N."/>
            <person name="Hill D."/>
            <person name="Huminiecki L."/>
            <person name="Iacono M."/>
            <person name="Ikeo K."/>
            <person name="Iwama A."/>
            <person name="Ishikawa T."/>
            <person name="Jakt M."/>
            <person name="Kanapin A."/>
            <person name="Katoh M."/>
            <person name="Kawasawa Y."/>
            <person name="Kelso J."/>
            <person name="Kitamura H."/>
            <person name="Kitano H."/>
            <person name="Kollias G."/>
            <person name="Krishnan S.P."/>
            <person name="Kruger A."/>
            <person name="Kummerfeld S.K."/>
            <person name="Kurochkin I.V."/>
            <person name="Lareau L.F."/>
            <person name="Lazarevic D."/>
            <person name="Lipovich L."/>
            <person name="Liu J."/>
            <person name="Liuni S."/>
            <person name="McWilliam S."/>
            <person name="Madan Babu M."/>
            <person name="Madera M."/>
            <person name="Marchionni L."/>
            <person name="Matsuda H."/>
            <person name="Matsuzawa S."/>
            <person name="Miki H."/>
            <person name="Mignone F."/>
            <person name="Miyake S."/>
            <person name="Morris K."/>
            <person name="Mottagui-Tabar S."/>
            <person name="Mulder N."/>
            <person name="Nakano N."/>
            <person name="Nakauchi H."/>
            <person name="Ng P."/>
            <person name="Nilsson R."/>
            <person name="Nishiguchi S."/>
            <person name="Nishikawa S."/>
            <person name="Nori F."/>
            <person name="Ohara O."/>
            <person name="Okazaki Y."/>
            <person name="Orlando V."/>
            <person name="Pang K.C."/>
            <person name="Pavan W.J."/>
            <person name="Pavesi G."/>
            <person name="Pesole G."/>
            <person name="Petrovsky N."/>
            <person name="Piazza S."/>
            <person name="Reed J."/>
            <person name="Reid J.F."/>
            <person name="Ring B.Z."/>
            <person name="Ringwald M."/>
            <person name="Rost B."/>
            <person name="Ruan Y."/>
            <person name="Salzberg S.L."/>
            <person name="Sandelin A."/>
            <person name="Schneider C."/>
            <person name="Schoenbach C."/>
            <person name="Sekiguchi K."/>
            <person name="Semple C.A."/>
            <person name="Seno S."/>
            <person name="Sessa L."/>
            <person name="Sheng Y."/>
            <person name="Shibata Y."/>
            <person name="Shimada H."/>
            <person name="Shimada K."/>
            <person name="Silva D."/>
            <person name="Sinclair B."/>
            <person name="Sperling S."/>
            <person name="Stupka E."/>
            <person name="Sugiura K."/>
            <person name="Sultana R."/>
            <person name="Takenaka Y."/>
            <person name="Taki K."/>
            <person name="Tammoja K."/>
            <person name="Tan S.L."/>
            <person name="Tang S."/>
            <person name="Taylor M.S."/>
            <person name="Tegner J."/>
            <person name="Teichmann S.A."/>
            <person name="Ueda H.R."/>
            <person name="van Nimwegen E."/>
            <person name="Verardo R."/>
            <person name="Wei C.L."/>
            <person name="Yagi K."/>
            <person name="Yamanishi H."/>
            <person name="Zabarovsky E."/>
            <person name="Zhu S."/>
            <person name="Zimmer A."/>
            <person name="Hide W."/>
            <person name="Bult C."/>
            <person name="Grimmond S.M."/>
            <person name="Teasdale R.D."/>
            <person name="Liu E.T."/>
            <person name="Brusic V."/>
            <person name="Quackenbush J."/>
            <person name="Wahlestedt C."/>
            <person name="Mattick J.S."/>
            <person name="Hume D.A."/>
            <person name="Kai C."/>
            <person name="Sasaki D."/>
            <person name="Tomaru Y."/>
            <person name="Fukuda S."/>
            <person name="Kanamori-Katayama M."/>
            <person name="Suzuki M."/>
            <person name="Aoki J."/>
            <person name="Arakawa T."/>
            <person name="Iida J."/>
            <person name="Imamura K."/>
            <person name="Itoh M."/>
            <person name="Kato T."/>
            <person name="Kawaji H."/>
            <person name="Kawagashira N."/>
            <person name="Kawashima T."/>
            <person name="Kojima M."/>
            <person name="Kondo S."/>
            <person name="Konno H."/>
            <person name="Nakano K."/>
            <person name="Ninomiya N."/>
            <person name="Nishio T."/>
            <person name="Okada M."/>
            <person name="Plessy C."/>
            <person name="Shibata K."/>
            <person name="Shiraki T."/>
            <person name="Suzuki S."/>
            <person name="Tagami M."/>
            <person name="Waki K."/>
            <person name="Watahiki A."/>
            <person name="Okamura-Oho Y."/>
            <person name="Suzuki H."/>
            <person name="Kawai J."/>
            <person name="Hayashizaki Y."/>
        </authorList>
    </citation>
    <scope>NUCLEOTIDE SEQUENCE [LARGE SCALE MRNA] OF 1696-1914</scope>
    <source>
        <strain>C57BL/6J</strain>
        <tissue>Bone marrow</tissue>
    </source>
</reference>
<reference key="4">
    <citation type="journal article" date="2007" name="Proc. Natl. Acad. Sci. U.S.A.">
        <title>Large-scale phosphorylation analysis of mouse liver.</title>
        <authorList>
            <person name="Villen J."/>
            <person name="Beausoleil S.A."/>
            <person name="Gerber S.A."/>
            <person name="Gygi S.P."/>
        </authorList>
    </citation>
    <scope>PHOSPHORYLATION [LARGE SCALE ANALYSIS] AT SER-875 AND SER-877</scope>
    <scope>IDENTIFICATION BY MASS SPECTROMETRY [LARGE SCALE ANALYSIS]</scope>
    <source>
        <tissue>Liver</tissue>
    </source>
</reference>
<reference key="5">
    <citation type="journal article" date="2010" name="Cell">
        <title>A tissue-specific atlas of mouse protein phosphorylation and expression.</title>
        <authorList>
            <person name="Huttlin E.L."/>
            <person name="Jedrychowski M.P."/>
            <person name="Elias J.E."/>
            <person name="Goswami T."/>
            <person name="Rad R."/>
            <person name="Beausoleil S.A."/>
            <person name="Villen J."/>
            <person name="Haas W."/>
            <person name="Sowa M.E."/>
            <person name="Gygi S.P."/>
        </authorList>
    </citation>
    <scope>PHOSPHORYLATION [LARGE SCALE ANALYSIS] AT SER-869; SER-875; SER-877 AND SER-1246</scope>
    <scope>IDENTIFICATION BY MASS SPECTROMETRY [LARGE SCALE ANALYSIS]</scope>
    <source>
        <tissue>Brain</tissue>
        <tissue>Brown adipose tissue</tissue>
        <tissue>Kidney</tissue>
        <tissue>Liver</tissue>
        <tissue>Lung</tissue>
        <tissue>Pancreas</tissue>
        <tissue>Spleen</tissue>
        <tissue>Testis</tissue>
    </source>
</reference>
<reference key="6">
    <citation type="journal article" date="2011" name="PLoS Pathog.">
        <title>Functional analysis of host factors that mediate the intracellular lifestyle of Cryptococcus neoformans.</title>
        <authorList>
            <person name="Qin Q.M."/>
            <person name="Luo J."/>
            <person name="Lin X."/>
            <person name="Pei J."/>
            <person name="Li L."/>
            <person name="Ficht T.A."/>
            <person name="de Figueiredo P."/>
        </authorList>
    </citation>
    <scope>FUNCTION (MICROBIAL INFECTION)</scope>
</reference>
<keyword id="KW-0072">Autophagy</keyword>
<keyword id="KW-0256">Endoplasmic reticulum</keyword>
<keyword id="KW-0551">Lipid droplet</keyword>
<keyword id="KW-0445">Lipid transport</keyword>
<keyword id="KW-0472">Membrane</keyword>
<keyword id="KW-0597">Phosphoprotein</keyword>
<keyword id="KW-1185">Reference proteome</keyword>
<keyword id="KW-0813">Transport</keyword>